<protein>
    <recommendedName>
        <fullName>Beta-lactamase L2</fullName>
        <ecNumber>3.5.2.6</ecNumber>
    </recommendedName>
    <alternativeName>
        <fullName>Penicillinase</fullName>
    </alternativeName>
</protein>
<reference key="1">
    <citation type="journal article" date="1997" name="Antimicrob. Agents Chemother.">
        <title>Sequence analysis and enzyme kinetics of the L2 serine beta-lactamase from Stenotrophomonas maltophilia.</title>
        <authorList>
            <person name="Walsh T.R."/>
            <person name="Macgowan A.P."/>
            <person name="Bennett P.M."/>
        </authorList>
    </citation>
    <scope>NUCLEOTIDE SEQUENCE [GENOMIC DNA]</scope>
    <source>
        <strain>IID 1275</strain>
    </source>
</reference>
<reference key="2">
    <citation type="journal article" date="1991" name="Biochem. J.">
        <title>A standard numbering scheme for the class A beta-lactamases.</title>
        <authorList>
            <person name="Ambler R.P."/>
            <person name="Coulson A.F."/>
            <person name="Frere J.M."/>
            <person name="Ghuysen J.M."/>
            <person name="Joris B."/>
            <person name="Forsman M."/>
            <person name="Levesque R.C."/>
            <person name="Tiraby G."/>
            <person name="Waley S.G."/>
        </authorList>
    </citation>
    <scope>AMINO ACID NUMBERING SCHEME</scope>
</reference>
<comment type="catalytic activity">
    <reaction evidence="3">
        <text>a beta-lactam + H2O = a substituted beta-amino acid</text>
        <dbReference type="Rhea" id="RHEA:20401"/>
        <dbReference type="ChEBI" id="CHEBI:15377"/>
        <dbReference type="ChEBI" id="CHEBI:35627"/>
        <dbReference type="ChEBI" id="CHEBI:140347"/>
        <dbReference type="EC" id="3.5.2.6"/>
    </reaction>
</comment>
<comment type="PTM">
    <text>Predicted to be exported by the Tat system. The position of the signal peptide cleavage has not been experimentally proven.</text>
</comment>
<comment type="miscellaneous">
    <text evidence="5">The class A beta-lactamase family has a specific amino-acid numbering system, sometimes called Ambler or ABL numbering and often misspelt as Amber. A multiple sequence alignment was used to derive a consensus sequence and then the consensus was numbered taking into account insertions and deletions. This allows use of identical numbers, e.g. for active site residues, despite differences in protein length. UniProt always uses natural numbering of residues, hence there appear to be differences in numbering between this entry and some papers.</text>
</comment>
<comment type="similarity">
    <text evidence="4">Belongs to the class-A beta-lactamase family.</text>
</comment>
<sequence>MLARRRFLQFSGAAVASSLALPLLARAAGKTAASAPTDAALTAATDFAALEKAVRGRFGVTLLDTASGRRIGHRQDERFPMCSTFKSVLAATVLSQAERQPALLDTRVPVRDADLLSHAPVTRRHAGKDMTVRDLCRATIITSDNTAANLLFGVVGGPPAVTAFLRSIGDAVSRTDRLEPELNSFAKGDPRDTTTPAAMAATLQRVVLGEVLQLASRQQLADWLIDNETGDACLRAGLGKLWRVRDKTGSNGEDARNDIAVLWPVAGGAPWVLTAYLQAGAISYEQRATVLAQVGRIADRLIG</sequence>
<name>BLA2_STEMA</name>
<feature type="signal peptide" description="Tat-type signal" evidence="2">
    <location>
        <begin position="1"/>
        <end position="35"/>
    </location>
</feature>
<feature type="chain" id="PRO_0000017021" description="Beta-lactamase L2">
    <location>
        <begin position="36"/>
        <end position="303"/>
    </location>
</feature>
<feature type="active site" description="Acyl-ester intermediate" evidence="3">
    <location>
        <position position="83"/>
    </location>
</feature>
<feature type="binding site" evidence="1">
    <location>
        <begin position="247"/>
        <end position="249"/>
    </location>
    <ligand>
        <name>substrate</name>
    </ligand>
</feature>
<dbReference type="EC" id="3.5.2.6"/>
<dbReference type="EMBL" id="Y08562">
    <property type="protein sequence ID" value="CAA69869.1"/>
    <property type="molecule type" value="Genomic_DNA"/>
</dbReference>
<dbReference type="SMR" id="P96465"/>
<dbReference type="BindingDB" id="P96465"/>
<dbReference type="GO" id="GO:0008800">
    <property type="term" value="F:beta-lactamase activity"/>
    <property type="evidence" value="ECO:0007669"/>
    <property type="project" value="UniProtKB-EC"/>
</dbReference>
<dbReference type="GO" id="GO:0030655">
    <property type="term" value="P:beta-lactam antibiotic catabolic process"/>
    <property type="evidence" value="ECO:0007669"/>
    <property type="project" value="InterPro"/>
</dbReference>
<dbReference type="GO" id="GO:0046677">
    <property type="term" value="P:response to antibiotic"/>
    <property type="evidence" value="ECO:0007669"/>
    <property type="project" value="UniProtKB-KW"/>
</dbReference>
<dbReference type="Gene3D" id="3.40.710.10">
    <property type="entry name" value="DD-peptidase/beta-lactamase superfamily"/>
    <property type="match status" value="1"/>
</dbReference>
<dbReference type="InterPro" id="IPR012338">
    <property type="entry name" value="Beta-lactam/transpept-like"/>
</dbReference>
<dbReference type="InterPro" id="IPR045155">
    <property type="entry name" value="Beta-lactam_cat"/>
</dbReference>
<dbReference type="InterPro" id="IPR000871">
    <property type="entry name" value="Beta-lactam_class-A"/>
</dbReference>
<dbReference type="InterPro" id="IPR023650">
    <property type="entry name" value="Beta-lactam_class-A_AS"/>
</dbReference>
<dbReference type="InterPro" id="IPR049643">
    <property type="entry name" value="Beta-lactam_L2"/>
</dbReference>
<dbReference type="InterPro" id="IPR006311">
    <property type="entry name" value="TAT_signal"/>
</dbReference>
<dbReference type="NCBIfam" id="NF033103">
    <property type="entry name" value="bla_class_A"/>
    <property type="match status" value="1"/>
</dbReference>
<dbReference type="NCBIfam" id="NF000232">
    <property type="entry name" value="lactamase_L2"/>
    <property type="match status" value="1"/>
</dbReference>
<dbReference type="PANTHER" id="PTHR35333">
    <property type="entry name" value="BETA-LACTAMASE"/>
    <property type="match status" value="1"/>
</dbReference>
<dbReference type="PANTHER" id="PTHR35333:SF3">
    <property type="entry name" value="BETA-LACTAMASE-TYPE TRANSPEPTIDASE FOLD CONTAINING PROTEIN"/>
    <property type="match status" value="1"/>
</dbReference>
<dbReference type="Pfam" id="PF13354">
    <property type="entry name" value="Beta-lactamase2"/>
    <property type="match status" value="1"/>
</dbReference>
<dbReference type="PRINTS" id="PR00118">
    <property type="entry name" value="BLACTAMASEA"/>
</dbReference>
<dbReference type="SUPFAM" id="SSF56601">
    <property type="entry name" value="beta-lactamase/transpeptidase-like"/>
    <property type="match status" value="1"/>
</dbReference>
<dbReference type="PROSITE" id="PS00146">
    <property type="entry name" value="BETA_LACTAMASE_A"/>
    <property type="match status" value="1"/>
</dbReference>
<dbReference type="PROSITE" id="PS51318">
    <property type="entry name" value="TAT"/>
    <property type="match status" value="1"/>
</dbReference>
<organism>
    <name type="scientific">Stenotrophomonas maltophilia</name>
    <name type="common">Pseudomonas maltophilia</name>
    <name type="synonym">Xanthomonas maltophilia</name>
    <dbReference type="NCBI Taxonomy" id="40324"/>
    <lineage>
        <taxon>Bacteria</taxon>
        <taxon>Pseudomonadati</taxon>
        <taxon>Pseudomonadota</taxon>
        <taxon>Gammaproteobacteria</taxon>
        <taxon>Lysobacterales</taxon>
        <taxon>Lysobacteraceae</taxon>
        <taxon>Stenotrophomonas</taxon>
        <taxon>Stenotrophomonas maltophilia group</taxon>
    </lineage>
</organism>
<accession>P96465</accession>
<proteinExistence type="inferred from homology"/>
<keyword id="KW-0046">Antibiotic resistance</keyword>
<keyword id="KW-0378">Hydrolase</keyword>
<keyword id="KW-0732">Signal</keyword>
<evidence type="ECO:0000250" key="1"/>
<evidence type="ECO:0000255" key="2">
    <source>
        <dbReference type="PROSITE-ProRule" id="PRU00648"/>
    </source>
</evidence>
<evidence type="ECO:0000255" key="3">
    <source>
        <dbReference type="PROSITE-ProRule" id="PRU10101"/>
    </source>
</evidence>
<evidence type="ECO:0000305" key="4"/>
<evidence type="ECO:0000305" key="5">
    <source>
    </source>
</evidence>